<proteinExistence type="evidence at protein level"/>
<evidence type="ECO:0000250" key="1"/>
<evidence type="ECO:0000250" key="2">
    <source>
        <dbReference type="UniProtKB" id="P20000"/>
    </source>
</evidence>
<evidence type="ECO:0000255" key="3">
    <source>
        <dbReference type="PROSITE-ProRule" id="PRU10007"/>
    </source>
</evidence>
<evidence type="ECO:0000255" key="4">
    <source>
        <dbReference type="PROSITE-ProRule" id="PRU10008"/>
    </source>
</evidence>
<evidence type="ECO:0000269" key="5">
    <source>
    </source>
</evidence>
<evidence type="ECO:0000305" key="6"/>
<accession>Q25417</accession>
<dbReference type="EC" id="1.2.1.3"/>
<dbReference type="EMBL" id="Z31698">
    <property type="protein sequence ID" value="CAA83503.1"/>
    <property type="molecule type" value="Genomic_DNA"/>
</dbReference>
<dbReference type="PIR" id="S43184">
    <property type="entry name" value="S43184"/>
</dbReference>
<dbReference type="SMR" id="Q25417"/>
<dbReference type="VEuPathDB" id="TriTrypDB:LtaPh_2511800"/>
<dbReference type="UniPathway" id="UPA00780">
    <property type="reaction ID" value="UER00768"/>
</dbReference>
<dbReference type="GO" id="GO:0005739">
    <property type="term" value="C:mitochondrion"/>
    <property type="evidence" value="ECO:0007669"/>
    <property type="project" value="UniProtKB-SubCell"/>
</dbReference>
<dbReference type="GO" id="GO:0004029">
    <property type="term" value="F:aldehyde dehydrogenase (NAD+) activity"/>
    <property type="evidence" value="ECO:0007669"/>
    <property type="project" value="UniProtKB-EC"/>
</dbReference>
<dbReference type="GO" id="GO:0003723">
    <property type="term" value="F:RNA binding"/>
    <property type="evidence" value="ECO:0007669"/>
    <property type="project" value="UniProtKB-KW"/>
</dbReference>
<dbReference type="GO" id="GO:0006068">
    <property type="term" value="P:ethanol catabolic process"/>
    <property type="evidence" value="ECO:0007669"/>
    <property type="project" value="UniProtKB-UniPathway"/>
</dbReference>
<dbReference type="CDD" id="cd07091">
    <property type="entry name" value="ALDH_F1-2_Ald2-like"/>
    <property type="match status" value="1"/>
</dbReference>
<dbReference type="FunFam" id="3.40.605.10:FF:000011">
    <property type="entry name" value="ALD5p Mitochondrial aldehyde dehydrogenase"/>
    <property type="match status" value="1"/>
</dbReference>
<dbReference type="FunFam" id="3.40.605.10:FF:000026">
    <property type="entry name" value="Aldehyde dehydrogenase, putative"/>
    <property type="match status" value="1"/>
</dbReference>
<dbReference type="FunFam" id="3.40.309.10:FF:000001">
    <property type="entry name" value="Mitochondrial aldehyde dehydrogenase 2"/>
    <property type="match status" value="1"/>
</dbReference>
<dbReference type="Gene3D" id="3.40.605.10">
    <property type="entry name" value="Aldehyde Dehydrogenase, Chain A, domain 1"/>
    <property type="match status" value="1"/>
</dbReference>
<dbReference type="Gene3D" id="3.40.309.10">
    <property type="entry name" value="Aldehyde Dehydrogenase, Chain A, domain 2"/>
    <property type="match status" value="1"/>
</dbReference>
<dbReference type="InterPro" id="IPR016161">
    <property type="entry name" value="Ald_DH/histidinol_DH"/>
</dbReference>
<dbReference type="InterPro" id="IPR016163">
    <property type="entry name" value="Ald_DH_C"/>
</dbReference>
<dbReference type="InterPro" id="IPR016160">
    <property type="entry name" value="Ald_DH_CS_CYS"/>
</dbReference>
<dbReference type="InterPro" id="IPR029510">
    <property type="entry name" value="Ald_DH_CS_GLU"/>
</dbReference>
<dbReference type="InterPro" id="IPR016162">
    <property type="entry name" value="Ald_DH_N"/>
</dbReference>
<dbReference type="InterPro" id="IPR015590">
    <property type="entry name" value="Aldehyde_DH_dom"/>
</dbReference>
<dbReference type="PANTHER" id="PTHR11699">
    <property type="entry name" value="ALDEHYDE DEHYDROGENASE-RELATED"/>
    <property type="match status" value="1"/>
</dbReference>
<dbReference type="Pfam" id="PF00171">
    <property type="entry name" value="Aldedh"/>
    <property type="match status" value="1"/>
</dbReference>
<dbReference type="SUPFAM" id="SSF53720">
    <property type="entry name" value="ALDH-like"/>
    <property type="match status" value="1"/>
</dbReference>
<dbReference type="PROSITE" id="PS00070">
    <property type="entry name" value="ALDEHYDE_DEHYDR_CYS"/>
    <property type="match status" value="1"/>
</dbReference>
<dbReference type="PROSITE" id="PS00687">
    <property type="entry name" value="ALDEHYDE_DEHYDR_GLU"/>
    <property type="match status" value="1"/>
</dbReference>
<gene>
    <name type="primary">ALDH2</name>
</gene>
<feature type="transit peptide" description="Mitochondrion" evidence="5">
    <location>
        <begin position="1"/>
        <end position="9"/>
    </location>
</feature>
<feature type="chain" id="PRO_0000007171" description="Aldehyde dehydrogenase, mitochondrial">
    <location>
        <begin position="10"/>
        <end position="498"/>
    </location>
</feature>
<feature type="active site" description="Proton acceptor" evidence="3 4">
    <location>
        <position position="265"/>
    </location>
</feature>
<feature type="active site" description="Nucleophile" evidence="3 4">
    <location>
        <position position="299"/>
    </location>
</feature>
<feature type="binding site" evidence="1">
    <location>
        <begin position="242"/>
        <end position="247"/>
    </location>
    <ligand>
        <name>NAD(+)</name>
        <dbReference type="ChEBI" id="CHEBI:57540"/>
    </ligand>
</feature>
<feature type="site" description="Transition state stabilizer" evidence="2">
    <location>
        <position position="166"/>
    </location>
</feature>
<sequence length="498" mass="54252">MLRATLARLEMAPKVTHIQEKLLINGKFVPAVSGKTFEVVNPADEKVIANVAEAEKADVDLAVKAARHAFESFRMTDCQWRRNLMLRLADILEKNSKEMAALESLDNGKPYEVALNVDVALSVECFRYCAGLADKVNGTVPPRSGNFLGIVKRQPIGVCGQIIPWNFPLLMAAFKLSPALAMGNTVVLKPAEQTPLTAVRLGEMVMEAGYPDGVLNILPGFGATAGSEIARHMDVDKIAFTGSTAVGHQVMQMAAETNLKKVSLELGGKSALIVCEDADLEEAAEVATTRVYFNTGQVCTASSRIYVHESVYDEFVSRLRKNAEARKVGPGNDTGNNMGPLVSKKQHERVLGYIEDGVKAGATVVTGGKKIGDKGYFVQPTIFSDVKEDMRICKEEIFGPVTCVMKYKDMDEVVKRANDSIYGLAAGICTRSMDTALRYSTYLNAGTVWVNTWNNFCPSMPFGGFKQSGIGRELGKEVVDMYTEPKAIHFASRSIVKP</sequence>
<organism>
    <name type="scientific">Leishmania tarentolae</name>
    <name type="common">Sauroleishmania tarentolae</name>
    <dbReference type="NCBI Taxonomy" id="5689"/>
    <lineage>
        <taxon>Eukaryota</taxon>
        <taxon>Discoba</taxon>
        <taxon>Euglenozoa</taxon>
        <taxon>Kinetoplastea</taxon>
        <taxon>Metakinetoplastina</taxon>
        <taxon>Trypanosomatida</taxon>
        <taxon>Trypanosomatidae</taxon>
        <taxon>Leishmaniinae</taxon>
        <taxon>Leishmania</taxon>
        <taxon>lizard Leishmania</taxon>
    </lineage>
</organism>
<reference key="1">
    <citation type="journal article" date="1995" name="Mol. Biochem. Parasitol.">
        <title>Characterization of two nuclear-encoded protein components of mitochondrial ribonucleoprotein complexes from Leishmania tarentolae.</title>
        <authorList>
            <person name="Bringaud F."/>
            <person name="Peris M."/>
            <person name="Zen K.H."/>
            <person name="Simpson L."/>
        </authorList>
    </citation>
    <scope>NUCLEOTIDE SEQUENCE [GENOMIC DNA]</scope>
    <scope>PROTEIN SEQUENCE OF 10-31</scope>
    <source>
        <strain>UC</strain>
    </source>
</reference>
<name>ALDH2_LEITA</name>
<protein>
    <recommendedName>
        <fullName>Aldehyde dehydrogenase, mitochondrial</fullName>
        <ecNumber>1.2.1.3</ecNumber>
    </recommendedName>
    <alternativeName>
        <fullName>ALDH class 2</fullName>
    </alternativeName>
    <alternativeName>
        <fullName>P51</fullName>
    </alternativeName>
</protein>
<keyword id="KW-0903">Direct protein sequencing</keyword>
<keyword id="KW-0496">Mitochondrion</keyword>
<keyword id="KW-0520">NAD</keyword>
<keyword id="KW-0560">Oxidoreductase</keyword>
<keyword id="KW-0694">RNA-binding</keyword>
<keyword id="KW-0809">Transit peptide</keyword>
<comment type="function">
    <text>Could have an RNA-binding activity in addition of its catalytic role.</text>
</comment>
<comment type="catalytic activity">
    <reaction>
        <text>an aldehyde + NAD(+) + H2O = a carboxylate + NADH + 2 H(+)</text>
        <dbReference type="Rhea" id="RHEA:16185"/>
        <dbReference type="ChEBI" id="CHEBI:15377"/>
        <dbReference type="ChEBI" id="CHEBI:15378"/>
        <dbReference type="ChEBI" id="CHEBI:17478"/>
        <dbReference type="ChEBI" id="CHEBI:29067"/>
        <dbReference type="ChEBI" id="CHEBI:57540"/>
        <dbReference type="ChEBI" id="CHEBI:57945"/>
        <dbReference type="EC" id="1.2.1.3"/>
    </reaction>
</comment>
<comment type="pathway">
    <text>Alcohol metabolism; ethanol degradation; acetate from ethanol: step 2/2.</text>
</comment>
<comment type="subcellular location">
    <subcellularLocation>
        <location>Mitochondrion</location>
    </subcellularLocation>
</comment>
<comment type="similarity">
    <text evidence="6">Belongs to the aldehyde dehydrogenase family.</text>
</comment>